<name>ADF10_ORYSJ</name>
<evidence type="ECO:0000250" key="1"/>
<evidence type="ECO:0000255" key="2">
    <source>
        <dbReference type="PROSITE-ProRule" id="PRU00599"/>
    </source>
</evidence>
<evidence type="ECO:0000305" key="3"/>
<evidence type="ECO:0000312" key="4">
    <source>
        <dbReference type="EMBL" id="EEE51279.1"/>
    </source>
</evidence>
<keyword id="KW-0009">Actin-binding</keyword>
<keyword id="KW-1185">Reference proteome</keyword>
<sequence>MEILGFTVMGGGGSPAWIEVPEKSKSAFWELKRRKVHRYVIFKIDDRREEIVVEKTGAPGESYDDFTASLPADDCRYAVYDLDFVSDDNCRKSKIFFISWSPSVSRIRAKTIYAVSRNQFRHELDGVHFEIQATDPDDMDLEVLRGRANRT</sequence>
<gene>
    <name type="primary">ADF10</name>
    <name type="ordered locus">Os10g0521100</name>
    <name type="ordered locus">LOC_Os10g37670</name>
    <name evidence="4" type="ORF">OsJ_32187</name>
    <name type="ORF">OSJNBb0018B10.29</name>
    <name type="ORF">OSJNBb0028C01.47</name>
</gene>
<accession>Q337A5</accession>
<accession>B7E9E6</accession>
<accession>Q9FWC0</accession>
<dbReference type="EMBL" id="AC051634">
    <property type="protein sequence ID" value="AAG13444.1"/>
    <property type="status" value="ALT_SEQ"/>
    <property type="molecule type" value="Genomic_DNA"/>
</dbReference>
<dbReference type="EMBL" id="AC079029">
    <property type="protein sequence ID" value="AAM92296.1"/>
    <property type="status" value="ALT_SEQ"/>
    <property type="molecule type" value="Genomic_DNA"/>
</dbReference>
<dbReference type="EMBL" id="DP000086">
    <property type="protein sequence ID" value="ABB47897.1"/>
    <property type="molecule type" value="Genomic_DNA"/>
</dbReference>
<dbReference type="EMBL" id="AP008216">
    <property type="protein sequence ID" value="BAF27002.1"/>
    <property type="molecule type" value="Genomic_DNA"/>
</dbReference>
<dbReference type="EMBL" id="AP014966">
    <property type="protein sequence ID" value="BAT11705.1"/>
    <property type="molecule type" value="Genomic_DNA"/>
</dbReference>
<dbReference type="EMBL" id="CM000147">
    <property type="protein sequence ID" value="EEE51279.1"/>
    <property type="molecule type" value="Genomic_DNA"/>
</dbReference>
<dbReference type="EMBL" id="AK064063">
    <property type="protein sequence ID" value="BAG88993.1"/>
    <property type="molecule type" value="mRNA"/>
</dbReference>
<dbReference type="EMBL" id="AK121749">
    <property type="protein sequence ID" value="BAH00635.1"/>
    <property type="molecule type" value="mRNA"/>
</dbReference>
<dbReference type="RefSeq" id="XP_015613387.1">
    <property type="nucleotide sequence ID" value="XM_015757901.1"/>
</dbReference>
<dbReference type="RefSeq" id="XP_015613388.1">
    <property type="nucleotide sequence ID" value="XM_015757902.1"/>
</dbReference>
<dbReference type="SMR" id="Q337A5"/>
<dbReference type="FunCoup" id="Q337A5">
    <property type="interactions" value="2303"/>
</dbReference>
<dbReference type="STRING" id="39947.Q337A5"/>
<dbReference type="PaxDb" id="39947-Q337A5"/>
<dbReference type="EnsemblPlants" id="Os10t0521100-01">
    <property type="protein sequence ID" value="Os10t0521100-01"/>
    <property type="gene ID" value="Os10g0521100"/>
</dbReference>
<dbReference type="GeneID" id="4349142"/>
<dbReference type="Gramene" id="Os10t0521100-01">
    <property type="protein sequence ID" value="Os10t0521100-01"/>
    <property type="gene ID" value="Os10g0521100"/>
</dbReference>
<dbReference type="KEGG" id="dosa:Os10g0521100"/>
<dbReference type="eggNOG" id="KOG1735">
    <property type="taxonomic scope" value="Eukaryota"/>
</dbReference>
<dbReference type="HOGENOM" id="CLU_094004_2_2_1"/>
<dbReference type="InParanoid" id="Q337A5"/>
<dbReference type="OMA" id="SDDNCHK"/>
<dbReference type="OrthoDB" id="10249245at2759"/>
<dbReference type="Proteomes" id="UP000000763">
    <property type="component" value="Chromosome 10"/>
</dbReference>
<dbReference type="Proteomes" id="UP000007752">
    <property type="component" value="Chromosome 10"/>
</dbReference>
<dbReference type="Proteomes" id="UP000059680">
    <property type="component" value="Chromosome 10"/>
</dbReference>
<dbReference type="GO" id="GO:0015629">
    <property type="term" value="C:actin cytoskeleton"/>
    <property type="evidence" value="ECO:0000318"/>
    <property type="project" value="GO_Central"/>
</dbReference>
<dbReference type="GO" id="GO:0005737">
    <property type="term" value="C:cytoplasm"/>
    <property type="evidence" value="ECO:0000318"/>
    <property type="project" value="GO_Central"/>
</dbReference>
<dbReference type="GO" id="GO:0051015">
    <property type="term" value="F:actin filament binding"/>
    <property type="evidence" value="ECO:0000318"/>
    <property type="project" value="GO_Central"/>
</dbReference>
<dbReference type="GO" id="GO:0030042">
    <property type="term" value="P:actin filament depolymerization"/>
    <property type="evidence" value="ECO:0000318"/>
    <property type="project" value="GO_Central"/>
</dbReference>
<dbReference type="CDD" id="cd11286">
    <property type="entry name" value="ADF_cofilin_like"/>
    <property type="match status" value="1"/>
</dbReference>
<dbReference type="Gene3D" id="3.40.20.10">
    <property type="entry name" value="Severin"/>
    <property type="match status" value="1"/>
</dbReference>
<dbReference type="InterPro" id="IPR002108">
    <property type="entry name" value="ADF-H"/>
</dbReference>
<dbReference type="InterPro" id="IPR029006">
    <property type="entry name" value="ADF-H/Gelsolin-like_dom_sf"/>
</dbReference>
<dbReference type="InterPro" id="IPR017904">
    <property type="entry name" value="ADF/Cofilin"/>
</dbReference>
<dbReference type="PANTHER" id="PTHR11913">
    <property type="entry name" value="COFILIN-RELATED"/>
    <property type="match status" value="1"/>
</dbReference>
<dbReference type="Pfam" id="PF00241">
    <property type="entry name" value="Cofilin_ADF"/>
    <property type="match status" value="1"/>
</dbReference>
<dbReference type="SMART" id="SM00102">
    <property type="entry name" value="ADF"/>
    <property type="match status" value="1"/>
</dbReference>
<dbReference type="SUPFAM" id="SSF55753">
    <property type="entry name" value="Actin depolymerizing proteins"/>
    <property type="match status" value="1"/>
</dbReference>
<dbReference type="PROSITE" id="PS51263">
    <property type="entry name" value="ADF_H"/>
    <property type="match status" value="1"/>
</dbReference>
<feature type="chain" id="PRO_0000278113" description="Actin-depolymerizing factor 10">
    <location>
        <begin position="1"/>
        <end position="151"/>
    </location>
</feature>
<feature type="domain" description="ADF-H" evidence="2">
    <location>
        <begin position="15"/>
        <end position="149"/>
    </location>
</feature>
<protein>
    <recommendedName>
        <fullName>Actin-depolymerizing factor 10</fullName>
        <shortName>ADF-10</shortName>
        <shortName>OsADF10</shortName>
    </recommendedName>
</protein>
<reference key="1">
    <citation type="journal article" date="2003" name="Science">
        <title>In-depth view of structure, activity, and evolution of rice chromosome 10.</title>
        <authorList>
            <person name="Yu Y."/>
            <person name="Rambo T."/>
            <person name="Currie J."/>
            <person name="Saski C."/>
            <person name="Kim H.-R."/>
            <person name="Collura K."/>
            <person name="Thompson S."/>
            <person name="Simmons J."/>
            <person name="Yang T.-J."/>
            <person name="Nah G."/>
            <person name="Patel A.J."/>
            <person name="Thurmond S."/>
            <person name="Henry D."/>
            <person name="Oates R."/>
            <person name="Palmer M."/>
            <person name="Pries G."/>
            <person name="Gibson J."/>
            <person name="Anderson H."/>
            <person name="Paradkar M."/>
            <person name="Crane L."/>
            <person name="Dale J."/>
            <person name="Carver M.B."/>
            <person name="Wood T."/>
            <person name="Frisch D."/>
            <person name="Engler F."/>
            <person name="Soderlund C."/>
            <person name="Palmer L.E."/>
            <person name="Teytelman L."/>
            <person name="Nascimento L."/>
            <person name="De la Bastide M."/>
            <person name="Spiegel L."/>
            <person name="Ware D."/>
            <person name="O'Shaughnessy A."/>
            <person name="Dike S."/>
            <person name="Dedhia N."/>
            <person name="Preston R."/>
            <person name="Huang E."/>
            <person name="Ferraro K."/>
            <person name="Kuit K."/>
            <person name="Miller B."/>
            <person name="Zutavern T."/>
            <person name="Katzenberger F."/>
            <person name="Muller S."/>
            <person name="Balija V."/>
            <person name="Martienssen R.A."/>
            <person name="Stein L."/>
            <person name="Minx P."/>
            <person name="Johnson D."/>
            <person name="Cordum H."/>
            <person name="Mardis E."/>
            <person name="Cheng Z."/>
            <person name="Jiang J."/>
            <person name="Wilson R."/>
            <person name="McCombie W.R."/>
            <person name="Wing R.A."/>
            <person name="Yuan Q."/>
            <person name="Ouyang S."/>
            <person name="Liu J."/>
            <person name="Jones K.M."/>
            <person name="Gansberger K."/>
            <person name="Moffat K."/>
            <person name="Hill J."/>
            <person name="Tsitrin T."/>
            <person name="Overton L."/>
            <person name="Bera J."/>
            <person name="Kim M."/>
            <person name="Jin S."/>
            <person name="Tallon L."/>
            <person name="Ciecko A."/>
            <person name="Pai G."/>
            <person name="Van Aken S."/>
            <person name="Utterback T."/>
            <person name="Reidmuller S."/>
            <person name="Bormann J."/>
            <person name="Feldblyum T."/>
            <person name="Hsiao J."/>
            <person name="Zismann V."/>
            <person name="Blunt S."/>
            <person name="de Vazeille A.R."/>
            <person name="Shaffer T."/>
            <person name="Koo H."/>
            <person name="Suh B."/>
            <person name="Yang Q."/>
            <person name="Haas B."/>
            <person name="Peterson J."/>
            <person name="Pertea M."/>
            <person name="Volfovsky N."/>
            <person name="Wortman J."/>
            <person name="White O."/>
            <person name="Salzberg S.L."/>
            <person name="Fraser C.M."/>
            <person name="Buell C.R."/>
            <person name="Messing J."/>
            <person name="Song R."/>
            <person name="Fuks G."/>
            <person name="Llaca V."/>
            <person name="Kovchak S."/>
            <person name="Young S."/>
            <person name="Bowers J.E."/>
            <person name="Paterson A.H."/>
            <person name="Johns M.A."/>
            <person name="Mao L."/>
            <person name="Pan H."/>
            <person name="Dean R.A."/>
        </authorList>
    </citation>
    <scope>NUCLEOTIDE SEQUENCE [LARGE SCALE GENOMIC DNA]</scope>
    <source>
        <strain>cv. Nipponbare</strain>
    </source>
</reference>
<reference key="2">
    <citation type="journal article" date="2005" name="Nature">
        <title>The map-based sequence of the rice genome.</title>
        <authorList>
            <consortium name="International rice genome sequencing project (IRGSP)"/>
        </authorList>
    </citation>
    <scope>NUCLEOTIDE SEQUENCE [LARGE SCALE GENOMIC DNA]</scope>
    <source>
        <strain>cv. Nipponbare</strain>
    </source>
</reference>
<reference key="3">
    <citation type="journal article" date="2008" name="Nucleic Acids Res.">
        <title>The rice annotation project database (RAP-DB): 2008 update.</title>
        <authorList>
            <consortium name="The rice annotation project (RAP)"/>
        </authorList>
    </citation>
    <scope>GENOME REANNOTATION</scope>
    <source>
        <strain>cv. Nipponbare</strain>
    </source>
</reference>
<reference key="4">
    <citation type="journal article" date="2013" name="Rice">
        <title>Improvement of the Oryza sativa Nipponbare reference genome using next generation sequence and optical map data.</title>
        <authorList>
            <person name="Kawahara Y."/>
            <person name="de la Bastide M."/>
            <person name="Hamilton J.P."/>
            <person name="Kanamori H."/>
            <person name="McCombie W.R."/>
            <person name="Ouyang S."/>
            <person name="Schwartz D.C."/>
            <person name="Tanaka T."/>
            <person name="Wu J."/>
            <person name="Zhou S."/>
            <person name="Childs K.L."/>
            <person name="Davidson R.M."/>
            <person name="Lin H."/>
            <person name="Quesada-Ocampo L."/>
            <person name="Vaillancourt B."/>
            <person name="Sakai H."/>
            <person name="Lee S.S."/>
            <person name="Kim J."/>
            <person name="Numa H."/>
            <person name="Itoh T."/>
            <person name="Buell C.R."/>
            <person name="Matsumoto T."/>
        </authorList>
    </citation>
    <scope>GENOME REANNOTATION</scope>
    <source>
        <strain>cv. Nipponbare</strain>
    </source>
</reference>
<reference key="5">
    <citation type="journal article" date="2005" name="PLoS Biol.">
        <title>The genomes of Oryza sativa: a history of duplications.</title>
        <authorList>
            <person name="Yu J."/>
            <person name="Wang J."/>
            <person name="Lin W."/>
            <person name="Li S."/>
            <person name="Li H."/>
            <person name="Zhou J."/>
            <person name="Ni P."/>
            <person name="Dong W."/>
            <person name="Hu S."/>
            <person name="Zeng C."/>
            <person name="Zhang J."/>
            <person name="Zhang Y."/>
            <person name="Li R."/>
            <person name="Xu Z."/>
            <person name="Li S."/>
            <person name="Li X."/>
            <person name="Zheng H."/>
            <person name="Cong L."/>
            <person name="Lin L."/>
            <person name="Yin J."/>
            <person name="Geng J."/>
            <person name="Li G."/>
            <person name="Shi J."/>
            <person name="Liu J."/>
            <person name="Lv H."/>
            <person name="Li J."/>
            <person name="Wang J."/>
            <person name="Deng Y."/>
            <person name="Ran L."/>
            <person name="Shi X."/>
            <person name="Wang X."/>
            <person name="Wu Q."/>
            <person name="Li C."/>
            <person name="Ren X."/>
            <person name="Wang J."/>
            <person name="Wang X."/>
            <person name="Li D."/>
            <person name="Liu D."/>
            <person name="Zhang X."/>
            <person name="Ji Z."/>
            <person name="Zhao W."/>
            <person name="Sun Y."/>
            <person name="Zhang Z."/>
            <person name="Bao J."/>
            <person name="Han Y."/>
            <person name="Dong L."/>
            <person name="Ji J."/>
            <person name="Chen P."/>
            <person name="Wu S."/>
            <person name="Liu J."/>
            <person name="Xiao Y."/>
            <person name="Bu D."/>
            <person name="Tan J."/>
            <person name="Yang L."/>
            <person name="Ye C."/>
            <person name="Zhang J."/>
            <person name="Xu J."/>
            <person name="Zhou Y."/>
            <person name="Yu Y."/>
            <person name="Zhang B."/>
            <person name="Zhuang S."/>
            <person name="Wei H."/>
            <person name="Liu B."/>
            <person name="Lei M."/>
            <person name="Yu H."/>
            <person name="Li Y."/>
            <person name="Xu H."/>
            <person name="Wei S."/>
            <person name="He X."/>
            <person name="Fang L."/>
            <person name="Zhang Z."/>
            <person name="Zhang Y."/>
            <person name="Huang X."/>
            <person name="Su Z."/>
            <person name="Tong W."/>
            <person name="Li J."/>
            <person name="Tong Z."/>
            <person name="Li S."/>
            <person name="Ye J."/>
            <person name="Wang L."/>
            <person name="Fang L."/>
            <person name="Lei T."/>
            <person name="Chen C.-S."/>
            <person name="Chen H.-C."/>
            <person name="Xu Z."/>
            <person name="Li H."/>
            <person name="Huang H."/>
            <person name="Zhang F."/>
            <person name="Xu H."/>
            <person name="Li N."/>
            <person name="Zhao C."/>
            <person name="Li S."/>
            <person name="Dong L."/>
            <person name="Huang Y."/>
            <person name="Li L."/>
            <person name="Xi Y."/>
            <person name="Qi Q."/>
            <person name="Li W."/>
            <person name="Zhang B."/>
            <person name="Hu W."/>
            <person name="Zhang Y."/>
            <person name="Tian X."/>
            <person name="Jiao Y."/>
            <person name="Liang X."/>
            <person name="Jin J."/>
            <person name="Gao L."/>
            <person name="Zheng W."/>
            <person name="Hao B."/>
            <person name="Liu S.-M."/>
            <person name="Wang W."/>
            <person name="Yuan L."/>
            <person name="Cao M."/>
            <person name="McDermott J."/>
            <person name="Samudrala R."/>
            <person name="Wang J."/>
            <person name="Wong G.K.-S."/>
            <person name="Yang H."/>
        </authorList>
    </citation>
    <scope>NUCLEOTIDE SEQUENCE [LARGE SCALE GENOMIC DNA]</scope>
    <source>
        <strain>cv. Nipponbare</strain>
    </source>
</reference>
<reference key="6">
    <citation type="journal article" date="2003" name="Science">
        <title>Collection, mapping, and annotation of over 28,000 cDNA clones from japonica rice.</title>
        <authorList>
            <consortium name="The rice full-length cDNA consortium"/>
        </authorList>
    </citation>
    <scope>NUCLEOTIDE SEQUENCE [LARGE SCALE MRNA]</scope>
    <source>
        <strain>cv. Nipponbare</strain>
    </source>
</reference>
<reference key="7">
    <citation type="journal article" date="2006" name="J. Plant Physiol.">
        <title>Comparative study of rice and Arabidopsis actin-depolymerizing factors gene families.</title>
        <authorList>
            <person name="Feng Y."/>
            <person name="Liu Q."/>
            <person name="Xue Q."/>
        </authorList>
    </citation>
    <scope>GENE FAMILY</scope>
</reference>
<organism>
    <name type="scientific">Oryza sativa subsp. japonica</name>
    <name type="common">Rice</name>
    <dbReference type="NCBI Taxonomy" id="39947"/>
    <lineage>
        <taxon>Eukaryota</taxon>
        <taxon>Viridiplantae</taxon>
        <taxon>Streptophyta</taxon>
        <taxon>Embryophyta</taxon>
        <taxon>Tracheophyta</taxon>
        <taxon>Spermatophyta</taxon>
        <taxon>Magnoliopsida</taxon>
        <taxon>Liliopsida</taxon>
        <taxon>Poales</taxon>
        <taxon>Poaceae</taxon>
        <taxon>BOP clade</taxon>
        <taxon>Oryzoideae</taxon>
        <taxon>Oryzeae</taxon>
        <taxon>Oryzinae</taxon>
        <taxon>Oryza</taxon>
        <taxon>Oryza sativa</taxon>
    </lineage>
</organism>
<proteinExistence type="evidence at transcript level"/>
<comment type="function">
    <text evidence="1">Actin-depolymerizing protein. Severs actin filaments (F-actin) and binds to actin monomers (By similarity).</text>
</comment>
<comment type="similarity">
    <text evidence="3">Belongs to the actin-binding proteins ADF family.</text>
</comment>
<comment type="sequence caution" evidence="3">
    <conflict type="erroneous gene model prediction">
        <sequence resource="EMBL-CDS" id="AAG13444"/>
    </conflict>
</comment>
<comment type="sequence caution" evidence="3">
    <conflict type="erroneous gene model prediction">
        <sequence resource="EMBL-CDS" id="AAM92296"/>
    </conflict>
</comment>